<proteinExistence type="inferred from homology"/>
<protein>
    <recommendedName>
        <fullName evidence="1">Lipoprotein signal peptidase</fullName>
        <ecNumber evidence="1">3.4.23.36</ecNumber>
    </recommendedName>
    <alternativeName>
        <fullName evidence="1">Prolipoprotein signal peptidase</fullName>
    </alternativeName>
    <alternativeName>
        <fullName evidence="1">Signal peptidase II</fullName>
        <shortName evidence="1">SPase II</shortName>
    </alternativeName>
</protein>
<reference key="1">
    <citation type="journal article" date="1995" name="Science">
        <title>The minimal gene complement of Mycoplasma genitalium.</title>
        <authorList>
            <person name="Fraser C.M."/>
            <person name="Gocayne J.D."/>
            <person name="White O."/>
            <person name="Adams M.D."/>
            <person name="Clayton R.A."/>
            <person name="Fleischmann R.D."/>
            <person name="Bult C.J."/>
            <person name="Kerlavage A.R."/>
            <person name="Sutton G.G."/>
            <person name="Kelley J.M."/>
            <person name="Fritchman J.L."/>
            <person name="Weidman J.F."/>
            <person name="Small K.V."/>
            <person name="Sandusky M."/>
            <person name="Fuhrmann J.L."/>
            <person name="Nguyen D.T."/>
            <person name="Utterback T.R."/>
            <person name="Saudek D.M."/>
            <person name="Phillips C.A."/>
            <person name="Merrick J.M."/>
            <person name="Tomb J.-F."/>
            <person name="Dougherty B.A."/>
            <person name="Bott K.F."/>
            <person name="Hu P.-C."/>
            <person name="Lucier T.S."/>
            <person name="Peterson S.N."/>
            <person name="Smith H.O."/>
            <person name="Hutchison C.A. III"/>
            <person name="Venter J.C."/>
        </authorList>
    </citation>
    <scope>NUCLEOTIDE SEQUENCE [LARGE SCALE GENOMIC DNA]</scope>
    <source>
        <strain>ATCC 33530 / DSM 19775 / NCTC 10195 / G37</strain>
    </source>
</reference>
<reference key="2">
    <citation type="journal article" date="1993" name="J. Bacteriol.">
        <title>A survey of the Mycoplasma genitalium genome by using random sequencing.</title>
        <authorList>
            <person name="Peterson S.N."/>
            <person name="Hu P.-C."/>
            <person name="Bott K.F."/>
            <person name="Hutchison C.A. III"/>
        </authorList>
    </citation>
    <scope>NUCLEOTIDE SEQUENCE [GENOMIC DNA] OF 1-38</scope>
    <source>
        <strain>ATCC 33530 / DSM 19775 / NCTC 10195 / G37</strain>
    </source>
</reference>
<dbReference type="EC" id="3.4.23.36" evidence="1"/>
<dbReference type="EMBL" id="L43967">
    <property type="protein sequence ID" value="AAC71428.1"/>
    <property type="molecule type" value="Genomic_DNA"/>
</dbReference>
<dbReference type="EMBL" id="U01759">
    <property type="protein sequence ID" value="AAD10573.1"/>
    <property type="molecule type" value="Genomic_DNA"/>
</dbReference>
<dbReference type="PIR" id="B64223">
    <property type="entry name" value="B64223"/>
</dbReference>
<dbReference type="RefSeq" id="WP_009885747.1">
    <property type="nucleotide sequence ID" value="NC_000908.2"/>
</dbReference>
<dbReference type="STRING" id="243273.MG_210"/>
<dbReference type="GeneID" id="88282342"/>
<dbReference type="KEGG" id="mge:MG_210"/>
<dbReference type="eggNOG" id="COG0597">
    <property type="taxonomic scope" value="Bacteria"/>
</dbReference>
<dbReference type="HOGENOM" id="CLU_1466696_0_0_14"/>
<dbReference type="InParanoid" id="Q49401"/>
<dbReference type="OrthoDB" id="401384at2"/>
<dbReference type="BioCyc" id="MGEN243273:G1GJ2-243-MONOMER"/>
<dbReference type="UniPathway" id="UPA00665"/>
<dbReference type="Proteomes" id="UP000000807">
    <property type="component" value="Chromosome"/>
</dbReference>
<dbReference type="GO" id="GO:0005886">
    <property type="term" value="C:plasma membrane"/>
    <property type="evidence" value="ECO:0000318"/>
    <property type="project" value="GO_Central"/>
</dbReference>
<dbReference type="GO" id="GO:0004190">
    <property type="term" value="F:aspartic-type endopeptidase activity"/>
    <property type="evidence" value="ECO:0007669"/>
    <property type="project" value="UniProtKB-UniRule"/>
</dbReference>
<dbReference type="GO" id="GO:0004175">
    <property type="term" value="F:endopeptidase activity"/>
    <property type="evidence" value="ECO:0000318"/>
    <property type="project" value="GO_Central"/>
</dbReference>
<dbReference type="GO" id="GO:0006508">
    <property type="term" value="P:proteolysis"/>
    <property type="evidence" value="ECO:0007669"/>
    <property type="project" value="UniProtKB-KW"/>
</dbReference>
<dbReference type="HAMAP" id="MF_00161">
    <property type="entry name" value="LspA"/>
    <property type="match status" value="1"/>
</dbReference>
<dbReference type="InterPro" id="IPR001872">
    <property type="entry name" value="Peptidase_A8"/>
</dbReference>
<dbReference type="NCBIfam" id="TIGR00077">
    <property type="entry name" value="lspA"/>
    <property type="match status" value="1"/>
</dbReference>
<dbReference type="PANTHER" id="PTHR33695">
    <property type="entry name" value="LIPOPROTEIN SIGNAL PEPTIDASE"/>
    <property type="match status" value="1"/>
</dbReference>
<dbReference type="PANTHER" id="PTHR33695:SF1">
    <property type="entry name" value="LIPOPROTEIN SIGNAL PEPTIDASE"/>
    <property type="match status" value="1"/>
</dbReference>
<dbReference type="Pfam" id="PF01252">
    <property type="entry name" value="Peptidase_A8"/>
    <property type="match status" value="1"/>
</dbReference>
<dbReference type="PRINTS" id="PR00781">
    <property type="entry name" value="LIPOSIGPTASE"/>
</dbReference>
<dbReference type="PROSITE" id="PS00855">
    <property type="entry name" value="SPASE_II"/>
    <property type="match status" value="1"/>
</dbReference>
<gene>
    <name evidence="1" type="primary">lspA</name>
    <name type="synonym">lsp</name>
    <name type="ordered locus">MG210</name>
</gene>
<comment type="function">
    <text evidence="1">This protein specifically catalyzes the removal of signal peptides from prolipoproteins.</text>
</comment>
<comment type="catalytic activity">
    <reaction evidence="1">
        <text>Release of signal peptides from bacterial membrane prolipoproteins. Hydrolyzes -Xaa-Yaa-Zaa-|-(S,diacylglyceryl)Cys-, in which Xaa is hydrophobic (preferably Leu), and Yaa (Ala or Ser) and Zaa (Gly or Ala) have small, neutral side chains.</text>
        <dbReference type="EC" id="3.4.23.36"/>
    </reaction>
</comment>
<comment type="pathway">
    <text evidence="1">Protein modification; lipoprotein biosynthesis (signal peptide cleavage).</text>
</comment>
<comment type="subcellular location">
    <subcellularLocation>
        <location evidence="1">Cell membrane</location>
        <topology evidence="1">Multi-pass membrane protein</topology>
    </subcellularLocation>
</comment>
<comment type="similarity">
    <text evidence="1 2">Belongs to the peptidase A8 family.</text>
</comment>
<name>LSPA_MYCGE</name>
<sequence>MKLRKTKFFSQLKHQVLTANQKPFLFYKLTMIGFVGFIILLQVFILRNALNGEMDNTMVANSGFINIYVIRNKGVGFSLLQNQTGLVYFLQGLLSVIALVFLVFMVKYSYIFWITTLAFGSLGNFFDRLTSANDSVLDYFIFQNGSSVFNFADCCITFGFIGLFFCFLIQMFKEFKHSKNQ</sequence>
<accession>Q49401</accession>
<accession>Q49210</accession>
<feature type="chain" id="PRO_0000178794" description="Lipoprotein signal peptidase">
    <location>
        <begin position="1"/>
        <end position="181"/>
    </location>
</feature>
<feature type="transmembrane region" description="Helical" evidence="1">
    <location>
        <begin position="25"/>
        <end position="45"/>
    </location>
</feature>
<feature type="transmembrane region" description="Helical" evidence="1">
    <location>
        <begin position="86"/>
        <end position="106"/>
    </location>
</feature>
<feature type="transmembrane region" description="Helical" evidence="1">
    <location>
        <begin position="107"/>
        <end position="127"/>
    </location>
</feature>
<feature type="transmembrane region" description="Helical" evidence="1">
    <location>
        <begin position="149"/>
        <end position="169"/>
    </location>
</feature>
<feature type="active site" evidence="1">
    <location>
        <position position="138"/>
    </location>
</feature>
<feature type="active site" evidence="1">
    <location>
        <position position="153"/>
    </location>
</feature>
<organism>
    <name type="scientific">Mycoplasma genitalium (strain ATCC 33530 / DSM 19775 / NCTC 10195 / G37)</name>
    <name type="common">Mycoplasmoides genitalium</name>
    <dbReference type="NCBI Taxonomy" id="243273"/>
    <lineage>
        <taxon>Bacteria</taxon>
        <taxon>Bacillati</taxon>
        <taxon>Mycoplasmatota</taxon>
        <taxon>Mycoplasmoidales</taxon>
        <taxon>Mycoplasmoidaceae</taxon>
        <taxon>Mycoplasmoides</taxon>
    </lineage>
</organism>
<keyword id="KW-0064">Aspartyl protease</keyword>
<keyword id="KW-1003">Cell membrane</keyword>
<keyword id="KW-0378">Hydrolase</keyword>
<keyword id="KW-0472">Membrane</keyword>
<keyword id="KW-0645">Protease</keyword>
<keyword id="KW-1185">Reference proteome</keyword>
<keyword id="KW-0812">Transmembrane</keyword>
<keyword id="KW-1133">Transmembrane helix</keyword>
<evidence type="ECO:0000255" key="1">
    <source>
        <dbReference type="HAMAP-Rule" id="MF_00161"/>
    </source>
</evidence>
<evidence type="ECO:0000305" key="2"/>